<protein>
    <recommendedName>
        <fullName>UAP56-interacting factor</fullName>
    </recommendedName>
    <alternativeName>
        <fullName>Forty-two-three domain-containing protein 1</fullName>
        <shortName>Protein 40-2-3</shortName>
    </alternativeName>
</protein>
<comment type="function">
    <text evidence="1">Required for mRNA export from the nucleus to the cytoplasm. Acts as an adapter that uses the DDX39B/UAP56-NFX1 pathway to ensure efficient mRNA export and delivering to the nuclear pore. Associates with spliced and unspliced mRNAs simultaneously with ALYREF/THOC4 (By similarity).</text>
</comment>
<comment type="subunit">
    <text evidence="1 4">Interacts with DDX39B/UAP56 and NXF1; interaction with DDX39B/UAP56 and NXF1 are mutually exclusive. Interacts with SSRP1; required for its recruitment to mRNAs (By similarity). Interacts with CHTOP.</text>
</comment>
<comment type="subcellular location">
    <subcellularLocation>
        <location evidence="1">Nucleus</location>
        <location evidence="1">Nucleoplasm</location>
    </subcellularLocation>
    <subcellularLocation>
        <location evidence="1">Nucleus speckle</location>
    </subcellularLocation>
</comment>
<comment type="alternative products">
    <event type="alternative splicing"/>
    <isoform>
        <id>Q91Z49-1</id>
        <name>1</name>
        <sequence type="displayed"/>
    </isoform>
    <isoform>
        <id>Q91Z49-2</id>
        <name>2</name>
        <sequence type="described" ref="VSP_025463 VSP_025464"/>
    </isoform>
    <isoform>
        <id>Q91Z49-3</id>
        <name>3</name>
        <sequence type="described" ref="VSP_025462"/>
    </isoform>
</comment>
<comment type="similarity">
    <text evidence="6">Belongs to the UIF family.</text>
</comment>
<accession>Q91Z49</accession>
<accession>Q3TJ68</accession>
<accession>Q3UT89</accession>
<accession>Q8BVM8</accession>
<accession>Q8K361</accession>
<accession>Q921B0</accession>
<accession>Q9D6A8</accession>
<evidence type="ECO:0000250" key="1"/>
<evidence type="ECO:0000250" key="2">
    <source>
        <dbReference type="UniProtKB" id="Q96QD9"/>
    </source>
</evidence>
<evidence type="ECO:0000256" key="3">
    <source>
        <dbReference type="SAM" id="MobiDB-lite"/>
    </source>
</evidence>
<evidence type="ECO:0000269" key="4">
    <source>
    </source>
</evidence>
<evidence type="ECO:0000303" key="5">
    <source>
    </source>
</evidence>
<evidence type="ECO:0000305" key="6"/>
<evidence type="ECO:0007744" key="7">
    <source>
    </source>
</evidence>
<evidence type="ECO:0007744" key="8">
    <source>
    </source>
</evidence>
<feature type="chain" id="PRO_0000287442" description="UAP56-interacting factor">
    <location>
        <begin position="1"/>
        <end position="317"/>
    </location>
</feature>
<feature type="region of interest" description="Disordered" evidence="3">
    <location>
        <begin position="1"/>
        <end position="26"/>
    </location>
</feature>
<feature type="short sequence motif" description="UAP56-binding motif">
    <location>
        <begin position="26"/>
        <end position="44"/>
    </location>
</feature>
<feature type="modified residue" description="N-acetylmethionine" evidence="2">
    <location>
        <position position="1"/>
    </location>
</feature>
<feature type="modified residue" description="Phosphothreonine" evidence="8">
    <location>
        <position position="14"/>
    </location>
</feature>
<feature type="modified residue" description="Phosphoserine" evidence="7 8">
    <location>
        <position position="23"/>
    </location>
</feature>
<feature type="modified residue" description="Phosphoserine" evidence="2">
    <location>
        <position position="60"/>
    </location>
</feature>
<feature type="modified residue" description="Phosphoserine" evidence="2">
    <location>
        <position position="117"/>
    </location>
</feature>
<feature type="cross-link" description="Glycyl lysine isopeptide (Lys-Gly) (interchain with G-Cter in SUMO1)" evidence="2">
    <location>
        <position position="139"/>
    </location>
</feature>
<feature type="cross-link" description="Glycyl lysine isopeptide (Lys-Gly) (interchain with G-Cter in SUMO2)" evidence="2">
    <location>
        <position position="260"/>
    </location>
</feature>
<feature type="splice variant" id="VSP_025462" description="In isoform 3." evidence="6">
    <location>
        <begin position="1"/>
        <end position="118"/>
    </location>
</feature>
<feature type="splice variant" id="VSP_025463" description="In isoform 2." evidence="5">
    <location>
        <begin position="166"/>
        <end position="174"/>
    </location>
</feature>
<feature type="splice variant" id="VSP_025464" description="In isoform 2." evidence="5">
    <location>
        <begin position="219"/>
        <end position="243"/>
    </location>
</feature>
<feature type="sequence conflict" description="In Ref. 3; CAC51437." evidence="6" ref="3">
    <original>I</original>
    <variation>V</variation>
    <location>
        <position position="73"/>
    </location>
</feature>
<feature type="sequence conflict" description="In Ref. 2; AAH28253." evidence="6" ref="2">
    <original>L</original>
    <variation>V</variation>
    <location>
        <position position="84"/>
    </location>
</feature>
<feature type="sequence conflict" description="In Ref. 3; CAC51437." evidence="6" ref="3">
    <original>S</original>
    <variation>C</variation>
    <location>
        <position position="307"/>
    </location>
</feature>
<feature type="sequence conflict" description="In Ref. 1; BAB29357." evidence="6" ref="1">
    <original>V</original>
    <variation>G</variation>
    <location>
        <position position="314"/>
    </location>
</feature>
<gene>
    <name type="primary">Fyttd1</name>
    <name type="synonym">Uif</name>
</gene>
<keyword id="KW-0007">Acetylation</keyword>
<keyword id="KW-0025">Alternative splicing</keyword>
<keyword id="KW-1017">Isopeptide bond</keyword>
<keyword id="KW-0509">mRNA transport</keyword>
<keyword id="KW-0539">Nucleus</keyword>
<keyword id="KW-0597">Phosphoprotein</keyword>
<keyword id="KW-1185">Reference proteome</keyword>
<keyword id="KW-0694">RNA-binding</keyword>
<keyword id="KW-0813">Transport</keyword>
<keyword id="KW-0832">Ubl conjugation</keyword>
<reference key="1">
    <citation type="journal article" date="2005" name="Science">
        <title>The transcriptional landscape of the mammalian genome.</title>
        <authorList>
            <person name="Carninci P."/>
            <person name="Kasukawa T."/>
            <person name="Katayama S."/>
            <person name="Gough J."/>
            <person name="Frith M.C."/>
            <person name="Maeda N."/>
            <person name="Oyama R."/>
            <person name="Ravasi T."/>
            <person name="Lenhard B."/>
            <person name="Wells C."/>
            <person name="Kodzius R."/>
            <person name="Shimokawa K."/>
            <person name="Bajic V.B."/>
            <person name="Brenner S.E."/>
            <person name="Batalov S."/>
            <person name="Forrest A.R."/>
            <person name="Zavolan M."/>
            <person name="Davis M.J."/>
            <person name="Wilming L.G."/>
            <person name="Aidinis V."/>
            <person name="Allen J.E."/>
            <person name="Ambesi-Impiombato A."/>
            <person name="Apweiler R."/>
            <person name="Aturaliya R.N."/>
            <person name="Bailey T.L."/>
            <person name="Bansal M."/>
            <person name="Baxter L."/>
            <person name="Beisel K.W."/>
            <person name="Bersano T."/>
            <person name="Bono H."/>
            <person name="Chalk A.M."/>
            <person name="Chiu K.P."/>
            <person name="Choudhary V."/>
            <person name="Christoffels A."/>
            <person name="Clutterbuck D.R."/>
            <person name="Crowe M.L."/>
            <person name="Dalla E."/>
            <person name="Dalrymple B.P."/>
            <person name="de Bono B."/>
            <person name="Della Gatta G."/>
            <person name="di Bernardo D."/>
            <person name="Down T."/>
            <person name="Engstrom P."/>
            <person name="Fagiolini M."/>
            <person name="Faulkner G."/>
            <person name="Fletcher C.F."/>
            <person name="Fukushima T."/>
            <person name="Furuno M."/>
            <person name="Futaki S."/>
            <person name="Gariboldi M."/>
            <person name="Georgii-Hemming P."/>
            <person name="Gingeras T.R."/>
            <person name="Gojobori T."/>
            <person name="Green R.E."/>
            <person name="Gustincich S."/>
            <person name="Harbers M."/>
            <person name="Hayashi Y."/>
            <person name="Hensch T.K."/>
            <person name="Hirokawa N."/>
            <person name="Hill D."/>
            <person name="Huminiecki L."/>
            <person name="Iacono M."/>
            <person name="Ikeo K."/>
            <person name="Iwama A."/>
            <person name="Ishikawa T."/>
            <person name="Jakt M."/>
            <person name="Kanapin A."/>
            <person name="Katoh M."/>
            <person name="Kawasawa Y."/>
            <person name="Kelso J."/>
            <person name="Kitamura H."/>
            <person name="Kitano H."/>
            <person name="Kollias G."/>
            <person name="Krishnan S.P."/>
            <person name="Kruger A."/>
            <person name="Kummerfeld S.K."/>
            <person name="Kurochkin I.V."/>
            <person name="Lareau L.F."/>
            <person name="Lazarevic D."/>
            <person name="Lipovich L."/>
            <person name="Liu J."/>
            <person name="Liuni S."/>
            <person name="McWilliam S."/>
            <person name="Madan Babu M."/>
            <person name="Madera M."/>
            <person name="Marchionni L."/>
            <person name="Matsuda H."/>
            <person name="Matsuzawa S."/>
            <person name="Miki H."/>
            <person name="Mignone F."/>
            <person name="Miyake S."/>
            <person name="Morris K."/>
            <person name="Mottagui-Tabar S."/>
            <person name="Mulder N."/>
            <person name="Nakano N."/>
            <person name="Nakauchi H."/>
            <person name="Ng P."/>
            <person name="Nilsson R."/>
            <person name="Nishiguchi S."/>
            <person name="Nishikawa S."/>
            <person name="Nori F."/>
            <person name="Ohara O."/>
            <person name="Okazaki Y."/>
            <person name="Orlando V."/>
            <person name="Pang K.C."/>
            <person name="Pavan W.J."/>
            <person name="Pavesi G."/>
            <person name="Pesole G."/>
            <person name="Petrovsky N."/>
            <person name="Piazza S."/>
            <person name="Reed J."/>
            <person name="Reid J.F."/>
            <person name="Ring B.Z."/>
            <person name="Ringwald M."/>
            <person name="Rost B."/>
            <person name="Ruan Y."/>
            <person name="Salzberg S.L."/>
            <person name="Sandelin A."/>
            <person name="Schneider C."/>
            <person name="Schoenbach C."/>
            <person name="Sekiguchi K."/>
            <person name="Semple C.A."/>
            <person name="Seno S."/>
            <person name="Sessa L."/>
            <person name="Sheng Y."/>
            <person name="Shibata Y."/>
            <person name="Shimada H."/>
            <person name="Shimada K."/>
            <person name="Silva D."/>
            <person name="Sinclair B."/>
            <person name="Sperling S."/>
            <person name="Stupka E."/>
            <person name="Sugiura K."/>
            <person name="Sultana R."/>
            <person name="Takenaka Y."/>
            <person name="Taki K."/>
            <person name="Tammoja K."/>
            <person name="Tan S.L."/>
            <person name="Tang S."/>
            <person name="Taylor M.S."/>
            <person name="Tegner J."/>
            <person name="Teichmann S.A."/>
            <person name="Ueda H.R."/>
            <person name="van Nimwegen E."/>
            <person name="Verardo R."/>
            <person name="Wei C.L."/>
            <person name="Yagi K."/>
            <person name="Yamanishi H."/>
            <person name="Zabarovsky E."/>
            <person name="Zhu S."/>
            <person name="Zimmer A."/>
            <person name="Hide W."/>
            <person name="Bult C."/>
            <person name="Grimmond S.M."/>
            <person name="Teasdale R.D."/>
            <person name="Liu E.T."/>
            <person name="Brusic V."/>
            <person name="Quackenbush J."/>
            <person name="Wahlestedt C."/>
            <person name="Mattick J.S."/>
            <person name="Hume D.A."/>
            <person name="Kai C."/>
            <person name="Sasaki D."/>
            <person name="Tomaru Y."/>
            <person name="Fukuda S."/>
            <person name="Kanamori-Katayama M."/>
            <person name="Suzuki M."/>
            <person name="Aoki J."/>
            <person name="Arakawa T."/>
            <person name="Iida J."/>
            <person name="Imamura K."/>
            <person name="Itoh M."/>
            <person name="Kato T."/>
            <person name="Kawaji H."/>
            <person name="Kawagashira N."/>
            <person name="Kawashima T."/>
            <person name="Kojima M."/>
            <person name="Kondo S."/>
            <person name="Konno H."/>
            <person name="Nakano K."/>
            <person name="Ninomiya N."/>
            <person name="Nishio T."/>
            <person name="Okada M."/>
            <person name="Plessy C."/>
            <person name="Shibata K."/>
            <person name="Shiraki T."/>
            <person name="Suzuki S."/>
            <person name="Tagami M."/>
            <person name="Waki K."/>
            <person name="Watahiki A."/>
            <person name="Okamura-Oho Y."/>
            <person name="Suzuki H."/>
            <person name="Kawai J."/>
            <person name="Hayashizaki Y."/>
        </authorList>
    </citation>
    <scope>NUCLEOTIDE SEQUENCE [LARGE SCALE MRNA] (ISOFORMS 1 AND 2)</scope>
    <source>
        <strain>C57BL/6J</strain>
        <strain>NOD</strain>
        <tissue>Egg</tissue>
        <tissue>Liver</tissue>
        <tissue>Lung</tissue>
        <tissue>Pancreas</tissue>
        <tissue>Placenta</tissue>
        <tissue>Spleen</tissue>
        <tissue>Testis</tissue>
    </source>
</reference>
<reference key="2">
    <citation type="journal article" date="2004" name="Genome Res.">
        <title>The status, quality, and expansion of the NIH full-length cDNA project: the Mammalian Gene Collection (MGC).</title>
        <authorList>
            <consortium name="The MGC Project Team"/>
        </authorList>
    </citation>
    <scope>NUCLEOTIDE SEQUENCE [LARGE SCALE MRNA] (ISOFORM 1)</scope>
    <source>
        <strain>FVB/N</strain>
        <tissue>Mammary tumor</tissue>
    </source>
</reference>
<reference key="3">
    <citation type="thesis" date="2001" institute="Faculty of Biological Sciences / Goettingen" country="Germany">
        <authorList>
            <person name="Schmidt T."/>
        </authorList>
    </citation>
    <scope>NUCLEOTIDE SEQUENCE [MRNA] OF 3-317 (ISOFORM 1)</scope>
</reference>
<reference key="4">
    <citation type="journal article" date="2007" name="Proc. Natl. Acad. Sci. U.S.A.">
        <title>Large-scale phosphorylation analysis of mouse liver.</title>
        <authorList>
            <person name="Villen J."/>
            <person name="Beausoleil S.A."/>
            <person name="Gerber S.A."/>
            <person name="Gygi S.P."/>
        </authorList>
    </citation>
    <scope>PHOSPHORYLATION [LARGE SCALE ANALYSIS] AT SER-23</scope>
    <scope>IDENTIFICATION BY MASS SPECTROMETRY [LARGE SCALE ANALYSIS]</scope>
    <source>
        <tissue>Liver</tissue>
    </source>
</reference>
<reference key="5">
    <citation type="journal article" date="2010" name="Cell">
        <title>A tissue-specific atlas of mouse protein phosphorylation and expression.</title>
        <authorList>
            <person name="Huttlin E.L."/>
            <person name="Jedrychowski M.P."/>
            <person name="Elias J.E."/>
            <person name="Goswami T."/>
            <person name="Rad R."/>
            <person name="Beausoleil S.A."/>
            <person name="Villen J."/>
            <person name="Haas W."/>
            <person name="Sowa M.E."/>
            <person name="Gygi S.P."/>
        </authorList>
    </citation>
    <scope>PHOSPHORYLATION [LARGE SCALE ANALYSIS] AT THR-14 AND SER-23</scope>
    <scope>IDENTIFICATION BY MASS SPECTROMETRY [LARGE SCALE ANALYSIS]</scope>
    <source>
        <tissue>Brain</tissue>
        <tissue>Brown adipose tissue</tissue>
        <tissue>Kidney</tissue>
        <tissue>Liver</tissue>
        <tissue>Testis</tissue>
    </source>
</reference>
<reference key="6">
    <citation type="journal article" date="2012" name="Mol. Cell. Proteomics">
        <title>Five friends of methylated chromatin target of protein-arginine-methyltransferase[prmt]-1 (chtop), a complex linking arginine methylation to desumoylation.</title>
        <authorList>
            <person name="Fanis P."/>
            <person name="Gillemans N."/>
            <person name="Aghajanirefah A."/>
            <person name="Pourfarzad F."/>
            <person name="Demmers J."/>
            <person name="Esteghamat F."/>
            <person name="Vadlamudi R.K."/>
            <person name="Grosveld F."/>
            <person name="Philipsen S."/>
            <person name="van Dijk T.B."/>
        </authorList>
    </citation>
    <scope>INTERACTION WITH CHTOP</scope>
</reference>
<sequence length="317" mass="35887">MNRFGTRLVGATATPPPPPKARSNENLDKIDMSLDDIIKLNRKEGKKQNFPRLNRRLQQSGTRQFRMRVRWGIQQNSGFGKTSLSRRGRVLPGKRRPYGVITGLAARKATGIRKGISPMNRPPLSDKNIERYFPALKRKTSLLRQNEVQRKQVAVLKRPNQLNRKNNIPANFTRNGNKLSHQKDTRQATFLFRRGLKVQTQLNTEQLIDDVVAKRTRQWRTSTTNGGILTVSIDNPGAVQCPVTQKPRLTRTAVPSFLTKREQSDVKKVPKGVPLQFDINSVGKQTGMTLNERFGILKEQRANLTFSKGGSRFVTVG</sequence>
<proteinExistence type="evidence at protein level"/>
<organism>
    <name type="scientific">Mus musculus</name>
    <name type="common">Mouse</name>
    <dbReference type="NCBI Taxonomy" id="10090"/>
    <lineage>
        <taxon>Eukaryota</taxon>
        <taxon>Metazoa</taxon>
        <taxon>Chordata</taxon>
        <taxon>Craniata</taxon>
        <taxon>Vertebrata</taxon>
        <taxon>Euteleostomi</taxon>
        <taxon>Mammalia</taxon>
        <taxon>Eutheria</taxon>
        <taxon>Euarchontoglires</taxon>
        <taxon>Glires</taxon>
        <taxon>Rodentia</taxon>
        <taxon>Myomorpha</taxon>
        <taxon>Muroidea</taxon>
        <taxon>Muridae</taxon>
        <taxon>Murinae</taxon>
        <taxon>Mus</taxon>
        <taxon>Mus</taxon>
    </lineage>
</organism>
<dbReference type="EMBL" id="AK014447">
    <property type="protein sequence ID" value="BAB29357.1"/>
    <property type="molecule type" value="mRNA"/>
</dbReference>
<dbReference type="EMBL" id="AK029785">
    <property type="protein sequence ID" value="BAC26615.1"/>
    <property type="molecule type" value="mRNA"/>
</dbReference>
<dbReference type="EMBL" id="AK050448">
    <property type="protein sequence ID" value="BAC34260.1"/>
    <property type="molecule type" value="mRNA"/>
</dbReference>
<dbReference type="EMBL" id="AK050479">
    <property type="protein sequence ID" value="BAC34279.1"/>
    <property type="molecule type" value="mRNA"/>
</dbReference>
<dbReference type="EMBL" id="AK077184">
    <property type="protein sequence ID" value="BAC36666.1"/>
    <property type="molecule type" value="mRNA"/>
</dbReference>
<dbReference type="EMBL" id="AK139638">
    <property type="protein sequence ID" value="BAE24091.1"/>
    <property type="molecule type" value="mRNA"/>
</dbReference>
<dbReference type="EMBL" id="AK157602">
    <property type="protein sequence ID" value="BAE34132.1"/>
    <property type="molecule type" value="mRNA"/>
</dbReference>
<dbReference type="EMBL" id="AK161252">
    <property type="protein sequence ID" value="BAE36271.1"/>
    <property type="molecule type" value="mRNA"/>
</dbReference>
<dbReference type="EMBL" id="AK166032">
    <property type="protein sequence ID" value="BAE38533.1"/>
    <property type="molecule type" value="mRNA"/>
</dbReference>
<dbReference type="EMBL" id="AK167564">
    <property type="protein sequence ID" value="BAE39627.1"/>
    <property type="molecule type" value="mRNA"/>
</dbReference>
<dbReference type="EMBL" id="AK170511">
    <property type="protein sequence ID" value="BAE41848.1"/>
    <property type="molecule type" value="mRNA"/>
</dbReference>
<dbReference type="EMBL" id="BC010204">
    <property type="protein sequence ID" value="AAH10204.1"/>
    <property type="molecule type" value="mRNA"/>
</dbReference>
<dbReference type="EMBL" id="BC028253">
    <property type="protein sequence ID" value="AAH28253.1"/>
    <property type="molecule type" value="mRNA"/>
</dbReference>
<dbReference type="EMBL" id="AJ344096">
    <property type="protein sequence ID" value="CAC51437.1"/>
    <property type="molecule type" value="mRNA"/>
</dbReference>
<dbReference type="CCDS" id="CCDS28125.1">
    <molecule id="Q91Z49-1"/>
</dbReference>
<dbReference type="CCDS" id="CCDS49833.1">
    <molecule id="Q91Z49-2"/>
</dbReference>
<dbReference type="RefSeq" id="NP_001152821.1">
    <molecule id="Q91Z49-2"/>
    <property type="nucleotide sequence ID" value="NM_001159349.1"/>
</dbReference>
<dbReference type="RefSeq" id="NP_081502.2">
    <molecule id="Q91Z49-1"/>
    <property type="nucleotide sequence ID" value="NM_027226.4"/>
</dbReference>
<dbReference type="BioGRID" id="213703">
    <property type="interactions" value="6"/>
</dbReference>
<dbReference type="FunCoup" id="Q91Z49">
    <property type="interactions" value="2584"/>
</dbReference>
<dbReference type="IntAct" id="Q91Z49">
    <property type="interactions" value="1"/>
</dbReference>
<dbReference type="STRING" id="10090.ENSMUSP00000023489"/>
<dbReference type="GlyGen" id="Q91Z49">
    <property type="glycosylation" value="4 sites, 2 N-linked glycans (2 sites)"/>
</dbReference>
<dbReference type="iPTMnet" id="Q91Z49"/>
<dbReference type="PhosphoSitePlus" id="Q91Z49"/>
<dbReference type="SwissPalm" id="Q91Z49"/>
<dbReference type="jPOST" id="Q91Z49"/>
<dbReference type="PaxDb" id="10090-ENSMUSP00000023489"/>
<dbReference type="PeptideAtlas" id="Q91Z49"/>
<dbReference type="ProteomicsDB" id="298430">
    <molecule id="Q91Z49-1"/>
</dbReference>
<dbReference type="ProteomicsDB" id="298431">
    <molecule id="Q91Z49-2"/>
</dbReference>
<dbReference type="ProteomicsDB" id="298432">
    <molecule id="Q91Z49-3"/>
</dbReference>
<dbReference type="Pumba" id="Q91Z49"/>
<dbReference type="Antibodypedia" id="54015">
    <property type="antibodies" value="140 antibodies from 21 providers"/>
</dbReference>
<dbReference type="DNASU" id="69823"/>
<dbReference type="Ensembl" id="ENSMUST00000023489.11">
    <molecule id="Q91Z49-1"/>
    <property type="protein sequence ID" value="ENSMUSP00000023489.5"/>
    <property type="gene ID" value="ENSMUSG00000022800.15"/>
</dbReference>
<dbReference type="Ensembl" id="ENSMUST00000171325.9">
    <molecule id="Q91Z49-2"/>
    <property type="protein sequence ID" value="ENSMUSP00000131446.2"/>
    <property type="gene ID" value="ENSMUSG00000022800.15"/>
</dbReference>
<dbReference type="Ensembl" id="ENSMUST00000232272.2">
    <molecule id="Q91Z49-3"/>
    <property type="protein sequence ID" value="ENSMUSP00000155929.2"/>
    <property type="gene ID" value="ENSMUSG00000022800.15"/>
</dbReference>
<dbReference type="GeneID" id="69823"/>
<dbReference type="KEGG" id="mmu:69823"/>
<dbReference type="UCSC" id="uc007yzp.2">
    <molecule id="Q91Z49-1"/>
    <property type="organism name" value="mouse"/>
</dbReference>
<dbReference type="UCSC" id="uc007yzq.2">
    <molecule id="Q91Z49-2"/>
    <property type="organism name" value="mouse"/>
</dbReference>
<dbReference type="AGR" id="MGI:1917955"/>
<dbReference type="CTD" id="84248"/>
<dbReference type="MGI" id="MGI:1917955">
    <property type="gene designation" value="Fyttd1"/>
</dbReference>
<dbReference type="VEuPathDB" id="HostDB:ENSMUSG00000022800"/>
<dbReference type="eggNOG" id="ENOG502QWD4">
    <property type="taxonomic scope" value="Eukaryota"/>
</dbReference>
<dbReference type="GeneTree" id="ENSGT00390000012807"/>
<dbReference type="HOGENOM" id="CLU_076911_0_0_1"/>
<dbReference type="InParanoid" id="Q91Z49"/>
<dbReference type="OMA" id="NGTRQFR"/>
<dbReference type="OrthoDB" id="9938627at2759"/>
<dbReference type="PhylomeDB" id="Q91Z49"/>
<dbReference type="TreeFam" id="TF336232"/>
<dbReference type="Reactome" id="R-MMU-159236">
    <property type="pathway name" value="Transport of Mature mRNA derived from an Intron-Containing Transcript"/>
</dbReference>
<dbReference type="Reactome" id="R-MMU-72187">
    <property type="pathway name" value="mRNA 3'-end processing"/>
</dbReference>
<dbReference type="Reactome" id="R-MMU-73856">
    <property type="pathway name" value="RNA Polymerase II Transcription Termination"/>
</dbReference>
<dbReference type="BioGRID-ORCS" id="69823">
    <property type="hits" value="1 hit in 76 CRISPR screens"/>
</dbReference>
<dbReference type="ChiTaRS" id="Fyttd1">
    <property type="organism name" value="mouse"/>
</dbReference>
<dbReference type="PRO" id="PR:Q91Z49"/>
<dbReference type="Proteomes" id="UP000000589">
    <property type="component" value="Chromosome 16"/>
</dbReference>
<dbReference type="RNAct" id="Q91Z49">
    <property type="molecule type" value="protein"/>
</dbReference>
<dbReference type="Bgee" id="ENSMUSG00000022800">
    <property type="expression patterns" value="Expressed in spermatocyte and 273 other cell types or tissues"/>
</dbReference>
<dbReference type="ExpressionAtlas" id="Q91Z49">
    <property type="expression patterns" value="baseline and differential"/>
</dbReference>
<dbReference type="GO" id="GO:0005829">
    <property type="term" value="C:cytosol"/>
    <property type="evidence" value="ECO:0007669"/>
    <property type="project" value="Ensembl"/>
</dbReference>
<dbReference type="GO" id="GO:0016607">
    <property type="term" value="C:nuclear speck"/>
    <property type="evidence" value="ECO:0000250"/>
    <property type="project" value="UniProtKB"/>
</dbReference>
<dbReference type="GO" id="GO:0005730">
    <property type="term" value="C:nucleolus"/>
    <property type="evidence" value="ECO:0007669"/>
    <property type="project" value="Ensembl"/>
</dbReference>
<dbReference type="GO" id="GO:0005654">
    <property type="term" value="C:nucleoplasm"/>
    <property type="evidence" value="ECO:0000250"/>
    <property type="project" value="UniProtKB"/>
</dbReference>
<dbReference type="GO" id="GO:0003729">
    <property type="term" value="F:mRNA binding"/>
    <property type="evidence" value="ECO:0000250"/>
    <property type="project" value="UniProtKB"/>
</dbReference>
<dbReference type="GO" id="GO:0006406">
    <property type="term" value="P:mRNA export from nucleus"/>
    <property type="evidence" value="ECO:0000250"/>
    <property type="project" value="UniProtKB"/>
</dbReference>
<dbReference type="InterPro" id="IPR009782">
    <property type="entry name" value="FYTTD1"/>
</dbReference>
<dbReference type="PANTHER" id="PTHR21038">
    <property type="entry name" value="40-2-3 PROTEIN-RELATED"/>
    <property type="match status" value="1"/>
</dbReference>
<dbReference type="PANTHER" id="PTHR21038:SF2">
    <property type="entry name" value="UAP56-INTERACTING FACTOR"/>
    <property type="match status" value="1"/>
</dbReference>
<dbReference type="Pfam" id="PF07078">
    <property type="entry name" value="FYTT"/>
    <property type="match status" value="1"/>
</dbReference>
<name>UIF_MOUSE</name>